<reference key="1">
    <citation type="journal article" date="2009" name="PLoS Biol.">
        <title>Lineage-specific biology revealed by a finished genome assembly of the mouse.</title>
        <authorList>
            <person name="Church D.M."/>
            <person name="Goodstadt L."/>
            <person name="Hillier L.W."/>
            <person name="Zody M.C."/>
            <person name="Goldstein S."/>
            <person name="She X."/>
            <person name="Bult C.J."/>
            <person name="Agarwala R."/>
            <person name="Cherry J.L."/>
            <person name="DiCuccio M."/>
            <person name="Hlavina W."/>
            <person name="Kapustin Y."/>
            <person name="Meric P."/>
            <person name="Maglott D."/>
            <person name="Birtle Z."/>
            <person name="Marques A.C."/>
            <person name="Graves T."/>
            <person name="Zhou S."/>
            <person name="Teague B."/>
            <person name="Potamousis K."/>
            <person name="Churas C."/>
            <person name="Place M."/>
            <person name="Herschleb J."/>
            <person name="Runnheim R."/>
            <person name="Forrest D."/>
            <person name="Amos-Landgraf J."/>
            <person name="Schwartz D.C."/>
            <person name="Cheng Z."/>
            <person name="Lindblad-Toh K."/>
            <person name="Eichler E.E."/>
            <person name="Ponting C.P."/>
        </authorList>
    </citation>
    <scope>NUCLEOTIDE SEQUENCE [LARGE SCALE GENOMIC DNA]</scope>
    <source>
        <strain>C57BL/6J</strain>
    </source>
</reference>
<dbReference type="EMBL" id="AC132609">
    <property type="status" value="NOT_ANNOTATED_CDS"/>
    <property type="molecule type" value="Genomic_DNA"/>
</dbReference>
<dbReference type="CCDS" id="CCDS70409.1"/>
<dbReference type="RefSeq" id="NP_001277217.1">
    <property type="nucleotide sequence ID" value="NM_001290288.2"/>
</dbReference>
<dbReference type="SMR" id="F6XZJ7"/>
<dbReference type="STRING" id="10090.ENSMUSP00000138551"/>
<dbReference type="iPTMnet" id="F6XZJ7"/>
<dbReference type="PhosphoSitePlus" id="F6XZJ7"/>
<dbReference type="PaxDb" id="10090-ENSMUSP00000138551"/>
<dbReference type="ProteomicsDB" id="256696"/>
<dbReference type="Antibodypedia" id="26042">
    <property type="antibodies" value="47 antibodies from 13 providers"/>
</dbReference>
<dbReference type="Ensembl" id="ENSMUST00000182869.2">
    <property type="protein sequence ID" value="ENSMUSP00000138551.2"/>
    <property type="gene ID" value="ENSMUSG00000090812.9"/>
</dbReference>
<dbReference type="GeneID" id="238333"/>
<dbReference type="KEGG" id="mmu:238333"/>
<dbReference type="UCSC" id="uc056yrs.1">
    <property type="organism name" value="mouse"/>
</dbReference>
<dbReference type="AGR" id="MGI:2685109"/>
<dbReference type="CTD" id="161394"/>
<dbReference type="MGI" id="MGI:2685109">
    <property type="gene designation" value="Samd15"/>
</dbReference>
<dbReference type="VEuPathDB" id="HostDB:ENSMUSG00000090812"/>
<dbReference type="eggNOG" id="ENOG502S3Z4">
    <property type="taxonomic scope" value="Eukaryota"/>
</dbReference>
<dbReference type="GeneTree" id="ENSGT00630000089942"/>
<dbReference type="HOGENOM" id="CLU_028120_0_0_1"/>
<dbReference type="InParanoid" id="F6XZJ7"/>
<dbReference type="OMA" id="PMDETHE"/>
<dbReference type="OrthoDB" id="6133291at2759"/>
<dbReference type="PhylomeDB" id="F6XZJ7"/>
<dbReference type="BioGRID-ORCS" id="238333">
    <property type="hits" value="0 hits in 55 CRISPR screens"/>
</dbReference>
<dbReference type="ChiTaRS" id="Samd15">
    <property type="organism name" value="mouse"/>
</dbReference>
<dbReference type="PRO" id="PR:F6XZJ7"/>
<dbReference type="Proteomes" id="UP000000589">
    <property type="component" value="Chromosome 12"/>
</dbReference>
<dbReference type="RNAct" id="F6XZJ7">
    <property type="molecule type" value="protein"/>
</dbReference>
<dbReference type="Bgee" id="ENSMUSG00000090812">
    <property type="expression patterns" value="Expressed in testis and 58 other cell types or tissues"/>
</dbReference>
<dbReference type="ExpressionAtlas" id="F6XZJ7">
    <property type="expression patterns" value="baseline and differential"/>
</dbReference>
<dbReference type="CDD" id="cd09530">
    <property type="entry name" value="SAM_Samd14"/>
    <property type="match status" value="1"/>
</dbReference>
<dbReference type="Gene3D" id="1.10.150.50">
    <property type="entry name" value="Transcription Factor, Ets-1"/>
    <property type="match status" value="1"/>
</dbReference>
<dbReference type="InterPro" id="IPR001660">
    <property type="entry name" value="SAM"/>
</dbReference>
<dbReference type="InterPro" id="IPR013761">
    <property type="entry name" value="SAM/pointed_sf"/>
</dbReference>
<dbReference type="PANTHER" id="PTHR46829">
    <property type="entry name" value="STERILE ALPHA MOTIF DOMAIN-CONTAINING PROTEIN 15"/>
    <property type="match status" value="1"/>
</dbReference>
<dbReference type="PANTHER" id="PTHR46829:SF1">
    <property type="entry name" value="STERILE ALPHA MOTIF DOMAIN-CONTAINING PROTEIN 15"/>
    <property type="match status" value="1"/>
</dbReference>
<dbReference type="Pfam" id="PF00536">
    <property type="entry name" value="SAM_1"/>
    <property type="match status" value="1"/>
</dbReference>
<dbReference type="SMART" id="SM00454">
    <property type="entry name" value="SAM"/>
    <property type="match status" value="1"/>
</dbReference>
<dbReference type="SUPFAM" id="SSF47769">
    <property type="entry name" value="SAM/Pointed domain"/>
    <property type="match status" value="1"/>
</dbReference>
<dbReference type="PROSITE" id="PS50105">
    <property type="entry name" value="SAM_DOMAIN"/>
    <property type="match status" value="1"/>
</dbReference>
<keyword id="KW-1185">Reference proteome</keyword>
<feature type="chain" id="PRO_0000416123" description="Sterile alpha motif domain-containing protein 15">
    <location>
        <begin position="1"/>
        <end position="620"/>
    </location>
</feature>
<feature type="domain" description="SAM" evidence="1">
    <location>
        <begin position="480"/>
        <end position="543"/>
    </location>
</feature>
<feature type="region of interest" description="Disordered" evidence="2">
    <location>
        <begin position="1"/>
        <end position="394"/>
    </location>
</feature>
<feature type="region of interest" description="Disordered" evidence="2">
    <location>
        <begin position="594"/>
        <end position="620"/>
    </location>
</feature>
<feature type="compositionally biased region" description="Basic and acidic residues" evidence="2">
    <location>
        <begin position="62"/>
        <end position="83"/>
    </location>
</feature>
<feature type="compositionally biased region" description="Basic and acidic residues" evidence="2">
    <location>
        <begin position="106"/>
        <end position="125"/>
    </location>
</feature>
<feature type="compositionally biased region" description="Basic and acidic residues" evidence="2">
    <location>
        <begin position="135"/>
        <end position="180"/>
    </location>
</feature>
<feature type="compositionally biased region" description="Polar residues" evidence="2">
    <location>
        <begin position="181"/>
        <end position="191"/>
    </location>
</feature>
<feature type="compositionally biased region" description="Basic residues" evidence="2">
    <location>
        <begin position="233"/>
        <end position="242"/>
    </location>
</feature>
<feature type="compositionally biased region" description="Acidic residues" evidence="2">
    <location>
        <begin position="261"/>
        <end position="270"/>
    </location>
</feature>
<feature type="compositionally biased region" description="Basic and acidic residues" evidence="2">
    <location>
        <begin position="271"/>
        <end position="286"/>
    </location>
</feature>
<feature type="compositionally biased region" description="Basic and acidic residues" evidence="2">
    <location>
        <begin position="295"/>
        <end position="315"/>
    </location>
</feature>
<feature type="compositionally biased region" description="Basic and acidic residues" evidence="2">
    <location>
        <begin position="323"/>
        <end position="337"/>
    </location>
</feature>
<feature type="compositionally biased region" description="Basic and acidic residues" evidence="2">
    <location>
        <begin position="347"/>
        <end position="382"/>
    </location>
</feature>
<feature type="compositionally biased region" description="Basic and acidic residues" evidence="2">
    <location>
        <begin position="594"/>
        <end position="604"/>
    </location>
</feature>
<feature type="compositionally biased region" description="Acidic residues" evidence="2">
    <location>
        <begin position="609"/>
        <end position="620"/>
    </location>
</feature>
<gene>
    <name type="primary">Samd15</name>
    <name type="synonym">Gm263</name>
</gene>
<proteinExistence type="predicted"/>
<protein>
    <recommendedName>
        <fullName>Sterile alpha motif domain-containing protein 15</fullName>
        <shortName>SAM domain-containing protein 15</shortName>
    </recommendedName>
</protein>
<organism>
    <name type="scientific">Mus musculus</name>
    <name type="common">Mouse</name>
    <dbReference type="NCBI Taxonomy" id="10090"/>
    <lineage>
        <taxon>Eukaryota</taxon>
        <taxon>Metazoa</taxon>
        <taxon>Chordata</taxon>
        <taxon>Craniata</taxon>
        <taxon>Vertebrata</taxon>
        <taxon>Euteleostomi</taxon>
        <taxon>Mammalia</taxon>
        <taxon>Eutheria</taxon>
        <taxon>Euarchontoglires</taxon>
        <taxon>Glires</taxon>
        <taxon>Rodentia</taxon>
        <taxon>Myomorpha</taxon>
        <taxon>Muroidea</taxon>
        <taxon>Muridae</taxon>
        <taxon>Murinae</taxon>
        <taxon>Mus</taxon>
        <taxon>Mus</taxon>
    </lineage>
</organism>
<evidence type="ECO:0000255" key="1">
    <source>
        <dbReference type="PROSITE-ProRule" id="PRU00184"/>
    </source>
</evidence>
<evidence type="ECO:0000256" key="2">
    <source>
        <dbReference type="SAM" id="MobiDB-lite"/>
    </source>
</evidence>
<name>SAM15_MOUSE</name>
<accession>F6XZJ7</accession>
<sequence length="620" mass="70457">MSEVSGDYNSDSDESLSLQPKRTKSGKLHNANADTLFEVSSKLSPNTDRDPGNVGNVPLEPTRTRKGDLVPVGKNHEVPDLQRQDVSVGVFKGPPTRTGTQLPTKIDPEQKTPDIRSEKLRKSVEEEALPPSKMTKSEKKQKESIKEKSTEPYEVTKPKFPDRKLRKSTEEADLKPHFKSTEQSGTEQPEQTKFPDKKLRQSTKKKVSGPLEDFEEESRRPIDEASLELSQKRPLKASKKAQKSSFDEKFPEMLEQITVELLDDQEETQEESIKEKVPEPLGDRKPSAQKHKLRKSSERSKLKDTLIEPSKDKDPGLQTQTEFPKEKLIKTTEKTGDKPQQITDPDIQEKSQPEPTEKNLELPNKPKPEEERDLPKEDKPESSKPNYPAGKDKLALPAKIKTEFIVGSPRESVESFSTLYETQEFLKDLQTDMNELFPIVDASESQTELRDSTVLPQEVELLGRKETKPSLTPEFEHLTWSPERVAEWISDLGFPQYKECFTENFINGQKLIHVNCSNLPQMGITDFEDMKAISYHTRVLLGIEEPLFSRSISLPYRDNKGLFFEQKGHSGVKSDSLTLAKFVEAAGLQEYNPEIKAEEKKEDALPENSLEENEELYEAT</sequence>